<dbReference type="EMBL" id="CP000783">
    <property type="protein sequence ID" value="ABU78899.1"/>
    <property type="molecule type" value="Genomic_DNA"/>
</dbReference>
<dbReference type="RefSeq" id="WP_004387081.1">
    <property type="nucleotide sequence ID" value="NC_009778.1"/>
</dbReference>
<dbReference type="SMR" id="A7MQP8"/>
<dbReference type="GeneID" id="92214720"/>
<dbReference type="KEGG" id="esa:ESA_03695"/>
<dbReference type="HOGENOM" id="CLU_062853_0_0_6"/>
<dbReference type="Proteomes" id="UP000000260">
    <property type="component" value="Chromosome"/>
</dbReference>
<dbReference type="GO" id="GO:0022625">
    <property type="term" value="C:cytosolic large ribosomal subunit"/>
    <property type="evidence" value="ECO:0007669"/>
    <property type="project" value="TreeGrafter"/>
</dbReference>
<dbReference type="GO" id="GO:0019843">
    <property type="term" value="F:rRNA binding"/>
    <property type="evidence" value="ECO:0007669"/>
    <property type="project" value="UniProtKB-UniRule"/>
</dbReference>
<dbReference type="GO" id="GO:0003735">
    <property type="term" value="F:structural constituent of ribosome"/>
    <property type="evidence" value="ECO:0007669"/>
    <property type="project" value="InterPro"/>
</dbReference>
<dbReference type="GO" id="GO:0000049">
    <property type="term" value="F:tRNA binding"/>
    <property type="evidence" value="ECO:0007669"/>
    <property type="project" value="UniProtKB-KW"/>
</dbReference>
<dbReference type="GO" id="GO:0006417">
    <property type="term" value="P:regulation of translation"/>
    <property type="evidence" value="ECO:0007669"/>
    <property type="project" value="UniProtKB-KW"/>
</dbReference>
<dbReference type="GO" id="GO:0006412">
    <property type="term" value="P:translation"/>
    <property type="evidence" value="ECO:0007669"/>
    <property type="project" value="UniProtKB-UniRule"/>
</dbReference>
<dbReference type="CDD" id="cd00403">
    <property type="entry name" value="Ribosomal_L1"/>
    <property type="match status" value="1"/>
</dbReference>
<dbReference type="FunFam" id="3.40.50.790:FF:000001">
    <property type="entry name" value="50S ribosomal protein L1"/>
    <property type="match status" value="1"/>
</dbReference>
<dbReference type="Gene3D" id="3.30.190.20">
    <property type="match status" value="1"/>
</dbReference>
<dbReference type="Gene3D" id="3.40.50.790">
    <property type="match status" value="1"/>
</dbReference>
<dbReference type="HAMAP" id="MF_01318_B">
    <property type="entry name" value="Ribosomal_uL1_B"/>
    <property type="match status" value="1"/>
</dbReference>
<dbReference type="InterPro" id="IPR005878">
    <property type="entry name" value="Ribosom_uL1_bac-type"/>
</dbReference>
<dbReference type="InterPro" id="IPR002143">
    <property type="entry name" value="Ribosomal_uL1"/>
</dbReference>
<dbReference type="InterPro" id="IPR023674">
    <property type="entry name" value="Ribosomal_uL1-like"/>
</dbReference>
<dbReference type="InterPro" id="IPR028364">
    <property type="entry name" value="Ribosomal_uL1/biogenesis"/>
</dbReference>
<dbReference type="InterPro" id="IPR016095">
    <property type="entry name" value="Ribosomal_uL1_3-a/b-sand"/>
</dbReference>
<dbReference type="InterPro" id="IPR023673">
    <property type="entry name" value="Ribosomal_uL1_CS"/>
</dbReference>
<dbReference type="NCBIfam" id="TIGR01169">
    <property type="entry name" value="rplA_bact"/>
    <property type="match status" value="1"/>
</dbReference>
<dbReference type="PANTHER" id="PTHR36427">
    <property type="entry name" value="54S RIBOSOMAL PROTEIN L1, MITOCHONDRIAL"/>
    <property type="match status" value="1"/>
</dbReference>
<dbReference type="PANTHER" id="PTHR36427:SF3">
    <property type="entry name" value="LARGE RIBOSOMAL SUBUNIT PROTEIN UL1M"/>
    <property type="match status" value="1"/>
</dbReference>
<dbReference type="Pfam" id="PF00687">
    <property type="entry name" value="Ribosomal_L1"/>
    <property type="match status" value="1"/>
</dbReference>
<dbReference type="PIRSF" id="PIRSF002155">
    <property type="entry name" value="Ribosomal_L1"/>
    <property type="match status" value="1"/>
</dbReference>
<dbReference type="SUPFAM" id="SSF56808">
    <property type="entry name" value="Ribosomal protein L1"/>
    <property type="match status" value="1"/>
</dbReference>
<dbReference type="PROSITE" id="PS01199">
    <property type="entry name" value="RIBOSOMAL_L1"/>
    <property type="match status" value="1"/>
</dbReference>
<reference key="1">
    <citation type="journal article" date="2010" name="PLoS ONE">
        <title>Genome sequence of Cronobacter sakazakii BAA-894 and comparative genomic hybridization analysis with other Cronobacter species.</title>
        <authorList>
            <person name="Kucerova E."/>
            <person name="Clifton S.W."/>
            <person name="Xia X.Q."/>
            <person name="Long F."/>
            <person name="Porwollik S."/>
            <person name="Fulton L."/>
            <person name="Fronick C."/>
            <person name="Minx P."/>
            <person name="Kyung K."/>
            <person name="Warren W."/>
            <person name="Fulton R."/>
            <person name="Feng D."/>
            <person name="Wollam A."/>
            <person name="Shah N."/>
            <person name="Bhonagiri V."/>
            <person name="Nash W.E."/>
            <person name="Hallsworth-Pepin K."/>
            <person name="Wilson R.K."/>
            <person name="McClelland M."/>
            <person name="Forsythe S.J."/>
        </authorList>
    </citation>
    <scope>NUCLEOTIDE SEQUENCE [LARGE SCALE GENOMIC DNA]</scope>
    <source>
        <strain>ATCC BAA-894</strain>
    </source>
</reference>
<accession>A7MQP8</accession>
<proteinExistence type="inferred from homology"/>
<evidence type="ECO:0000255" key="1">
    <source>
        <dbReference type="HAMAP-Rule" id="MF_01318"/>
    </source>
</evidence>
<evidence type="ECO:0000305" key="2"/>
<keyword id="KW-1185">Reference proteome</keyword>
<keyword id="KW-0678">Repressor</keyword>
<keyword id="KW-0687">Ribonucleoprotein</keyword>
<keyword id="KW-0689">Ribosomal protein</keyword>
<keyword id="KW-0694">RNA-binding</keyword>
<keyword id="KW-0699">rRNA-binding</keyword>
<keyword id="KW-0810">Translation regulation</keyword>
<keyword id="KW-0820">tRNA-binding</keyword>
<gene>
    <name evidence="1" type="primary">rplA</name>
    <name type="ordered locus">ESA_03695</name>
</gene>
<feature type="chain" id="PRO_1000051906" description="Large ribosomal subunit protein uL1">
    <location>
        <begin position="1"/>
        <end position="234"/>
    </location>
</feature>
<protein>
    <recommendedName>
        <fullName evidence="1">Large ribosomal subunit protein uL1</fullName>
    </recommendedName>
    <alternativeName>
        <fullName evidence="2">50S ribosomal protein L1</fullName>
    </alternativeName>
</protein>
<comment type="function">
    <text evidence="1">Binds directly to 23S rRNA. The L1 stalk is quite mobile in the ribosome, and is involved in E site tRNA release.</text>
</comment>
<comment type="function">
    <text evidence="1">Protein L1 is also a translational repressor protein, it controls the translation of the L11 operon by binding to its mRNA.</text>
</comment>
<comment type="subunit">
    <text evidence="1">Part of the 50S ribosomal subunit.</text>
</comment>
<comment type="similarity">
    <text evidence="1">Belongs to the universal ribosomal protein uL1 family.</text>
</comment>
<sequence length="234" mass="24703">MAKLTKRMRVIRDKVDATKQYDINEAITLLKELATAKFVESVDVAVNLGIDARKSDQNVRGATVLPHGTGRSVRVAVFTQGPNAEAAKAAGAELVGMEDLAEQIKKGEMNFDVVIASPDAMRVVGQLGQVLGPRGLMPNPKVGTVTPNVAEAVKNAKAGQVRYRNDKNGIIHTTIGKVDFDADKLKENLEALLVALKKAKPSSAKGVYIKKVSLSTTMGAGVAVDQSGLSAAAN</sequence>
<name>RL1_CROS8</name>
<organism>
    <name type="scientific">Cronobacter sakazakii (strain ATCC BAA-894)</name>
    <name type="common">Enterobacter sakazakii</name>
    <dbReference type="NCBI Taxonomy" id="290339"/>
    <lineage>
        <taxon>Bacteria</taxon>
        <taxon>Pseudomonadati</taxon>
        <taxon>Pseudomonadota</taxon>
        <taxon>Gammaproteobacteria</taxon>
        <taxon>Enterobacterales</taxon>
        <taxon>Enterobacteriaceae</taxon>
        <taxon>Cronobacter</taxon>
    </lineage>
</organism>